<gene>
    <name type="ordered locus">Sfri_2406</name>
</gene>
<reference key="1">
    <citation type="submission" date="2006-08" db="EMBL/GenBank/DDBJ databases">
        <title>Complete sequence of Shewanella frigidimarina NCIMB 400.</title>
        <authorList>
            <consortium name="US DOE Joint Genome Institute"/>
            <person name="Copeland A."/>
            <person name="Lucas S."/>
            <person name="Lapidus A."/>
            <person name="Barry K."/>
            <person name="Detter J.C."/>
            <person name="Glavina del Rio T."/>
            <person name="Hammon N."/>
            <person name="Israni S."/>
            <person name="Dalin E."/>
            <person name="Tice H."/>
            <person name="Pitluck S."/>
            <person name="Fredrickson J.K."/>
            <person name="Kolker E."/>
            <person name="McCuel L.A."/>
            <person name="DiChristina T."/>
            <person name="Nealson K.H."/>
            <person name="Newman D."/>
            <person name="Tiedje J.M."/>
            <person name="Zhou J."/>
            <person name="Romine M.F."/>
            <person name="Culley D.E."/>
            <person name="Serres M."/>
            <person name="Chertkov O."/>
            <person name="Brettin T."/>
            <person name="Bruce D."/>
            <person name="Han C."/>
            <person name="Tapia R."/>
            <person name="Gilna P."/>
            <person name="Schmutz J."/>
            <person name="Larimer F."/>
            <person name="Land M."/>
            <person name="Hauser L."/>
            <person name="Kyrpides N."/>
            <person name="Mikhailova N."/>
            <person name="Richardson P."/>
        </authorList>
    </citation>
    <scope>NUCLEOTIDE SEQUENCE [LARGE SCALE GENOMIC DNA]</scope>
    <source>
        <strain>NCIMB 400</strain>
    </source>
</reference>
<keyword id="KW-0963">Cytoplasm</keyword>
<keyword id="KW-0238">DNA-binding</keyword>
<keyword id="KW-1185">Reference proteome</keyword>
<accession>Q080R4</accession>
<name>Y2406_SHEFN</name>
<comment type="function">
    <text evidence="1">Binds to DNA and alters its conformation. May be involved in regulation of gene expression, nucleoid organization and DNA protection.</text>
</comment>
<comment type="subunit">
    <text evidence="1">Homodimer.</text>
</comment>
<comment type="subcellular location">
    <subcellularLocation>
        <location evidence="1">Cytoplasm</location>
        <location evidence="1">Nucleoid</location>
    </subcellularLocation>
</comment>
<comment type="similarity">
    <text evidence="1">Belongs to the YbaB/EbfC family.</text>
</comment>
<organism>
    <name type="scientific">Shewanella frigidimarina (strain NCIMB 400)</name>
    <dbReference type="NCBI Taxonomy" id="318167"/>
    <lineage>
        <taxon>Bacteria</taxon>
        <taxon>Pseudomonadati</taxon>
        <taxon>Pseudomonadota</taxon>
        <taxon>Gammaproteobacteria</taxon>
        <taxon>Alteromonadales</taxon>
        <taxon>Shewanellaceae</taxon>
        <taxon>Shewanella</taxon>
    </lineage>
</organism>
<protein>
    <recommendedName>
        <fullName evidence="1">Nucleoid-associated protein Sfri_2406</fullName>
    </recommendedName>
</protein>
<evidence type="ECO:0000255" key="1">
    <source>
        <dbReference type="HAMAP-Rule" id="MF_00274"/>
    </source>
</evidence>
<proteinExistence type="inferred from homology"/>
<dbReference type="EMBL" id="CP000447">
    <property type="protein sequence ID" value="ABI72251.1"/>
    <property type="molecule type" value="Genomic_DNA"/>
</dbReference>
<dbReference type="RefSeq" id="WP_011637860.1">
    <property type="nucleotide sequence ID" value="NC_008345.1"/>
</dbReference>
<dbReference type="SMR" id="Q080R4"/>
<dbReference type="STRING" id="318167.Sfri_2406"/>
<dbReference type="KEGG" id="sfr:Sfri_2406"/>
<dbReference type="eggNOG" id="COG0718">
    <property type="taxonomic scope" value="Bacteria"/>
</dbReference>
<dbReference type="HOGENOM" id="CLU_140930_0_0_6"/>
<dbReference type="OrthoDB" id="9808738at2"/>
<dbReference type="Proteomes" id="UP000000684">
    <property type="component" value="Chromosome"/>
</dbReference>
<dbReference type="GO" id="GO:0043590">
    <property type="term" value="C:bacterial nucleoid"/>
    <property type="evidence" value="ECO:0007669"/>
    <property type="project" value="UniProtKB-UniRule"/>
</dbReference>
<dbReference type="GO" id="GO:0005829">
    <property type="term" value="C:cytosol"/>
    <property type="evidence" value="ECO:0007669"/>
    <property type="project" value="TreeGrafter"/>
</dbReference>
<dbReference type="GO" id="GO:0003677">
    <property type="term" value="F:DNA binding"/>
    <property type="evidence" value="ECO:0007669"/>
    <property type="project" value="UniProtKB-UniRule"/>
</dbReference>
<dbReference type="FunFam" id="3.30.1310.10:FF:000001">
    <property type="entry name" value="Nucleoid-associated protein YbaB"/>
    <property type="match status" value="1"/>
</dbReference>
<dbReference type="Gene3D" id="3.30.1310.10">
    <property type="entry name" value="Nucleoid-associated protein YbaB-like domain"/>
    <property type="match status" value="1"/>
</dbReference>
<dbReference type="HAMAP" id="MF_00274">
    <property type="entry name" value="DNA_YbaB_EbfC"/>
    <property type="match status" value="1"/>
</dbReference>
<dbReference type="InterPro" id="IPR036894">
    <property type="entry name" value="YbaB-like_sf"/>
</dbReference>
<dbReference type="InterPro" id="IPR004401">
    <property type="entry name" value="YbaB/EbfC"/>
</dbReference>
<dbReference type="NCBIfam" id="TIGR00103">
    <property type="entry name" value="DNA_YbaB_EbfC"/>
    <property type="match status" value="1"/>
</dbReference>
<dbReference type="PANTHER" id="PTHR33449">
    <property type="entry name" value="NUCLEOID-ASSOCIATED PROTEIN YBAB"/>
    <property type="match status" value="1"/>
</dbReference>
<dbReference type="PANTHER" id="PTHR33449:SF1">
    <property type="entry name" value="NUCLEOID-ASSOCIATED PROTEIN YBAB"/>
    <property type="match status" value="1"/>
</dbReference>
<dbReference type="Pfam" id="PF02575">
    <property type="entry name" value="YbaB_DNA_bd"/>
    <property type="match status" value="1"/>
</dbReference>
<dbReference type="PIRSF" id="PIRSF004555">
    <property type="entry name" value="UCP004555"/>
    <property type="match status" value="1"/>
</dbReference>
<dbReference type="SUPFAM" id="SSF82607">
    <property type="entry name" value="YbaB-like"/>
    <property type="match status" value="1"/>
</dbReference>
<sequence length="110" mass="12021">MFGGKGGMGNLMKQAQMMQDKMAKVQEEIARTEMTGEAGAGLVKVTMTGNHNVRKVEIDPSLMEDDKEMLEDLIAAACNDAARRIEENQKTKMAEVTGGMQLPPGMKMPF</sequence>
<feature type="chain" id="PRO_1000003821" description="Nucleoid-associated protein Sfri_2406">
    <location>
        <begin position="1"/>
        <end position="110"/>
    </location>
</feature>